<dbReference type="EMBL" id="BX548174">
    <property type="protein sequence ID" value="CAE19642.1"/>
    <property type="molecule type" value="Genomic_DNA"/>
</dbReference>
<dbReference type="RefSeq" id="WP_011132817.1">
    <property type="nucleotide sequence ID" value="NC_005072.1"/>
</dbReference>
<dbReference type="SMR" id="Q7V0S1"/>
<dbReference type="STRING" id="59919.PMM1183"/>
<dbReference type="KEGG" id="pmm:PMM1183"/>
<dbReference type="eggNOG" id="COG0230">
    <property type="taxonomic scope" value="Bacteria"/>
</dbReference>
<dbReference type="HOGENOM" id="CLU_129938_2_1_3"/>
<dbReference type="Proteomes" id="UP000001026">
    <property type="component" value="Chromosome"/>
</dbReference>
<dbReference type="GO" id="GO:1990904">
    <property type="term" value="C:ribonucleoprotein complex"/>
    <property type="evidence" value="ECO:0007669"/>
    <property type="project" value="UniProtKB-KW"/>
</dbReference>
<dbReference type="GO" id="GO:0005840">
    <property type="term" value="C:ribosome"/>
    <property type="evidence" value="ECO:0007669"/>
    <property type="project" value="UniProtKB-KW"/>
</dbReference>
<dbReference type="GO" id="GO:0003735">
    <property type="term" value="F:structural constituent of ribosome"/>
    <property type="evidence" value="ECO:0007669"/>
    <property type="project" value="InterPro"/>
</dbReference>
<dbReference type="GO" id="GO:0006412">
    <property type="term" value="P:translation"/>
    <property type="evidence" value="ECO:0007669"/>
    <property type="project" value="UniProtKB-UniRule"/>
</dbReference>
<dbReference type="Gene3D" id="1.10.287.3980">
    <property type="match status" value="1"/>
</dbReference>
<dbReference type="HAMAP" id="MF_00391">
    <property type="entry name" value="Ribosomal_bL34"/>
    <property type="match status" value="1"/>
</dbReference>
<dbReference type="InterPro" id="IPR000271">
    <property type="entry name" value="Ribosomal_bL34"/>
</dbReference>
<dbReference type="InterPro" id="IPR020939">
    <property type="entry name" value="Ribosomal_bL34_CS"/>
</dbReference>
<dbReference type="NCBIfam" id="TIGR01030">
    <property type="entry name" value="rpmH_bact"/>
    <property type="match status" value="1"/>
</dbReference>
<dbReference type="Pfam" id="PF00468">
    <property type="entry name" value="Ribosomal_L34"/>
    <property type="match status" value="1"/>
</dbReference>
<dbReference type="PROSITE" id="PS00784">
    <property type="entry name" value="RIBOSOMAL_L34"/>
    <property type="match status" value="1"/>
</dbReference>
<gene>
    <name evidence="1" type="primary">rpmH</name>
    <name evidence="1" type="synonym">rpl34</name>
    <name type="ordered locus">PMM1183</name>
</gene>
<organism>
    <name type="scientific">Prochlorococcus marinus subsp. pastoris (strain CCMP1986 / NIES-2087 / MED4)</name>
    <dbReference type="NCBI Taxonomy" id="59919"/>
    <lineage>
        <taxon>Bacteria</taxon>
        <taxon>Bacillati</taxon>
        <taxon>Cyanobacteriota</taxon>
        <taxon>Cyanophyceae</taxon>
        <taxon>Synechococcales</taxon>
        <taxon>Prochlorococcaceae</taxon>
        <taxon>Prochlorococcus</taxon>
    </lineage>
</organism>
<protein>
    <recommendedName>
        <fullName evidence="1">Large ribosomal subunit protein bL34</fullName>
    </recommendedName>
    <alternativeName>
        <fullName evidence="3">50S ribosomal protein L34</fullName>
    </alternativeName>
</protein>
<comment type="similarity">
    <text evidence="1">Belongs to the bacterial ribosomal protein bL34 family.</text>
</comment>
<feature type="chain" id="PRO_0000187440" description="Large ribosomal subunit protein bL34">
    <location>
        <begin position="1"/>
        <end position="45"/>
    </location>
</feature>
<feature type="region of interest" description="Disordered" evidence="2">
    <location>
        <begin position="1"/>
        <end position="45"/>
    </location>
</feature>
<feature type="compositionally biased region" description="Basic residues" evidence="2">
    <location>
        <begin position="10"/>
        <end position="45"/>
    </location>
</feature>
<evidence type="ECO:0000255" key="1">
    <source>
        <dbReference type="HAMAP-Rule" id="MF_00391"/>
    </source>
</evidence>
<evidence type="ECO:0000256" key="2">
    <source>
        <dbReference type="SAM" id="MobiDB-lite"/>
    </source>
</evidence>
<evidence type="ECO:0000305" key="3"/>
<proteinExistence type="inferred from homology"/>
<sequence>MTKRTFGGTSRKRKRVSGFRVRMRSHTGRRVIKSRRKRGRERIAV</sequence>
<name>RL34_PROMP</name>
<keyword id="KW-0687">Ribonucleoprotein</keyword>
<keyword id="KW-0689">Ribosomal protein</keyword>
<accession>Q7V0S1</accession>
<reference key="1">
    <citation type="journal article" date="2003" name="Nature">
        <title>Genome divergence in two Prochlorococcus ecotypes reflects oceanic niche differentiation.</title>
        <authorList>
            <person name="Rocap G."/>
            <person name="Larimer F.W."/>
            <person name="Lamerdin J.E."/>
            <person name="Malfatti S."/>
            <person name="Chain P."/>
            <person name="Ahlgren N.A."/>
            <person name="Arellano A."/>
            <person name="Coleman M."/>
            <person name="Hauser L."/>
            <person name="Hess W.R."/>
            <person name="Johnson Z.I."/>
            <person name="Land M.L."/>
            <person name="Lindell D."/>
            <person name="Post A.F."/>
            <person name="Regala W."/>
            <person name="Shah M."/>
            <person name="Shaw S.L."/>
            <person name="Steglich C."/>
            <person name="Sullivan M.B."/>
            <person name="Ting C.S."/>
            <person name="Tolonen A."/>
            <person name="Webb E.A."/>
            <person name="Zinser E.R."/>
            <person name="Chisholm S.W."/>
        </authorList>
    </citation>
    <scope>NUCLEOTIDE SEQUENCE [LARGE SCALE GENOMIC DNA]</scope>
    <source>
        <strain>CCMP1986 / NIES-2087 / MED4</strain>
    </source>
</reference>